<proteinExistence type="inferred from homology"/>
<sequence>MSKMAQKWDAYYRLMRLDRPIGTMLLLWPCLMALLLAADGMPDLRVLIIFIIGVVVMRACGCIINDYADRKLDSHVARTRSRPLASGEVTVAEALTLFVVLGLFAFSLVLLLNPLVVQLSVVGIILTIIYPFTKRWTNMPQMFLGVVWSWSIPMAYAAQTGEVPASAWWLFAANWCWTVAYDTMYAMVDRDDDLKVGIKSTAILFGRFDREIIGAFQLAALGCFIAAGWSGDRGLLYGLGVLTFVGFSAYQQRLIYGRERGDCFKAFLNNNWAGLSLFLALGADYAFAAL</sequence>
<dbReference type="EC" id="2.5.1.39" evidence="1"/>
<dbReference type="EMBL" id="CP000507">
    <property type="protein sequence ID" value="ABL98630.1"/>
    <property type="molecule type" value="Genomic_DNA"/>
</dbReference>
<dbReference type="RefSeq" id="WP_011758540.1">
    <property type="nucleotide sequence ID" value="NC_008700.1"/>
</dbReference>
<dbReference type="SMR" id="A1S2M4"/>
<dbReference type="STRING" id="326297.Sama_0420"/>
<dbReference type="KEGG" id="saz:Sama_0420"/>
<dbReference type="eggNOG" id="COG0382">
    <property type="taxonomic scope" value="Bacteria"/>
</dbReference>
<dbReference type="HOGENOM" id="CLU_034879_1_0_6"/>
<dbReference type="UniPathway" id="UPA00232"/>
<dbReference type="Proteomes" id="UP000009175">
    <property type="component" value="Chromosome"/>
</dbReference>
<dbReference type="GO" id="GO:0005886">
    <property type="term" value="C:plasma membrane"/>
    <property type="evidence" value="ECO:0007669"/>
    <property type="project" value="UniProtKB-SubCell"/>
</dbReference>
<dbReference type="GO" id="GO:0008412">
    <property type="term" value="F:4-hydroxybenzoate polyprenyltransferase activity"/>
    <property type="evidence" value="ECO:0007669"/>
    <property type="project" value="UniProtKB-UniRule"/>
</dbReference>
<dbReference type="GO" id="GO:0006744">
    <property type="term" value="P:ubiquinone biosynthetic process"/>
    <property type="evidence" value="ECO:0007669"/>
    <property type="project" value="UniProtKB-UniRule"/>
</dbReference>
<dbReference type="CDD" id="cd13959">
    <property type="entry name" value="PT_UbiA_COQ2"/>
    <property type="match status" value="1"/>
</dbReference>
<dbReference type="FunFam" id="1.10.357.140:FF:000002">
    <property type="entry name" value="4-hydroxybenzoate octaprenyltransferase"/>
    <property type="match status" value="1"/>
</dbReference>
<dbReference type="FunFam" id="1.20.120.1780:FF:000001">
    <property type="entry name" value="4-hydroxybenzoate octaprenyltransferase"/>
    <property type="match status" value="1"/>
</dbReference>
<dbReference type="Gene3D" id="1.10.357.140">
    <property type="entry name" value="UbiA prenyltransferase"/>
    <property type="match status" value="1"/>
</dbReference>
<dbReference type="Gene3D" id="1.20.120.1780">
    <property type="entry name" value="UbiA prenyltransferase"/>
    <property type="match status" value="1"/>
</dbReference>
<dbReference type="HAMAP" id="MF_01635">
    <property type="entry name" value="UbiA"/>
    <property type="match status" value="1"/>
</dbReference>
<dbReference type="InterPro" id="IPR006370">
    <property type="entry name" value="HB_polyprenyltransferase-like"/>
</dbReference>
<dbReference type="InterPro" id="IPR039653">
    <property type="entry name" value="Prenyltransferase"/>
</dbReference>
<dbReference type="InterPro" id="IPR000537">
    <property type="entry name" value="UbiA_prenyltransferase"/>
</dbReference>
<dbReference type="InterPro" id="IPR030470">
    <property type="entry name" value="UbiA_prenylTrfase_CS"/>
</dbReference>
<dbReference type="InterPro" id="IPR044878">
    <property type="entry name" value="UbiA_sf"/>
</dbReference>
<dbReference type="NCBIfam" id="TIGR01474">
    <property type="entry name" value="ubiA_proteo"/>
    <property type="match status" value="1"/>
</dbReference>
<dbReference type="PANTHER" id="PTHR11048:SF28">
    <property type="entry name" value="4-HYDROXYBENZOATE POLYPRENYLTRANSFERASE, MITOCHONDRIAL"/>
    <property type="match status" value="1"/>
</dbReference>
<dbReference type="PANTHER" id="PTHR11048">
    <property type="entry name" value="PRENYLTRANSFERASES"/>
    <property type="match status" value="1"/>
</dbReference>
<dbReference type="Pfam" id="PF01040">
    <property type="entry name" value="UbiA"/>
    <property type="match status" value="1"/>
</dbReference>
<dbReference type="PROSITE" id="PS00943">
    <property type="entry name" value="UBIA"/>
    <property type="match status" value="1"/>
</dbReference>
<protein>
    <recommendedName>
        <fullName evidence="1">4-hydroxybenzoate octaprenyltransferase</fullName>
        <ecNumber evidence="1">2.5.1.39</ecNumber>
    </recommendedName>
    <alternativeName>
        <fullName evidence="1">4-HB polyprenyltransferase</fullName>
    </alternativeName>
</protein>
<gene>
    <name evidence="1" type="primary">ubiA</name>
    <name type="ordered locus">Sama_0420</name>
</gene>
<keyword id="KW-0997">Cell inner membrane</keyword>
<keyword id="KW-1003">Cell membrane</keyword>
<keyword id="KW-0460">Magnesium</keyword>
<keyword id="KW-0472">Membrane</keyword>
<keyword id="KW-1185">Reference proteome</keyword>
<keyword id="KW-0808">Transferase</keyword>
<keyword id="KW-0812">Transmembrane</keyword>
<keyword id="KW-1133">Transmembrane helix</keyword>
<keyword id="KW-0831">Ubiquinone biosynthesis</keyword>
<reference key="1">
    <citation type="submission" date="2006-12" db="EMBL/GenBank/DDBJ databases">
        <title>Complete sequence of Shewanella amazonensis SB2B.</title>
        <authorList>
            <consortium name="US DOE Joint Genome Institute"/>
            <person name="Copeland A."/>
            <person name="Lucas S."/>
            <person name="Lapidus A."/>
            <person name="Barry K."/>
            <person name="Detter J.C."/>
            <person name="Glavina del Rio T."/>
            <person name="Hammon N."/>
            <person name="Israni S."/>
            <person name="Dalin E."/>
            <person name="Tice H."/>
            <person name="Pitluck S."/>
            <person name="Munk A.C."/>
            <person name="Brettin T."/>
            <person name="Bruce D."/>
            <person name="Han C."/>
            <person name="Tapia R."/>
            <person name="Gilna P."/>
            <person name="Schmutz J."/>
            <person name="Larimer F."/>
            <person name="Land M."/>
            <person name="Hauser L."/>
            <person name="Kyrpides N."/>
            <person name="Mikhailova N."/>
            <person name="Fredrickson J."/>
            <person name="Richardson P."/>
        </authorList>
    </citation>
    <scope>NUCLEOTIDE SEQUENCE [LARGE SCALE GENOMIC DNA]</scope>
    <source>
        <strain>ATCC BAA-1098 / SB2B</strain>
    </source>
</reference>
<evidence type="ECO:0000255" key="1">
    <source>
        <dbReference type="HAMAP-Rule" id="MF_01635"/>
    </source>
</evidence>
<name>UBIA_SHEAM</name>
<accession>A1S2M4</accession>
<comment type="function">
    <text evidence="1">Catalyzes the prenylation of para-hydroxybenzoate (PHB) with an all-trans polyprenyl group. Mediates the second step in the final reaction sequence of ubiquinone-8 (UQ-8) biosynthesis, which is the condensation of the polyisoprenoid side chain with PHB, generating the first membrane-bound Q intermediate 3-octaprenyl-4-hydroxybenzoate.</text>
</comment>
<comment type="catalytic activity">
    <reaction evidence="1">
        <text>all-trans-octaprenyl diphosphate + 4-hydroxybenzoate = 4-hydroxy-3-(all-trans-octaprenyl)benzoate + diphosphate</text>
        <dbReference type="Rhea" id="RHEA:27782"/>
        <dbReference type="ChEBI" id="CHEBI:1617"/>
        <dbReference type="ChEBI" id="CHEBI:17879"/>
        <dbReference type="ChEBI" id="CHEBI:33019"/>
        <dbReference type="ChEBI" id="CHEBI:57711"/>
        <dbReference type="EC" id="2.5.1.39"/>
    </reaction>
</comment>
<comment type="cofactor">
    <cofactor evidence="1">
        <name>Mg(2+)</name>
        <dbReference type="ChEBI" id="CHEBI:18420"/>
    </cofactor>
</comment>
<comment type="pathway">
    <text evidence="1">Cofactor biosynthesis; ubiquinone biosynthesis.</text>
</comment>
<comment type="subcellular location">
    <subcellularLocation>
        <location evidence="1">Cell inner membrane</location>
        <topology evidence="1">Multi-pass membrane protein</topology>
    </subcellularLocation>
</comment>
<comment type="similarity">
    <text evidence="1">Belongs to the UbiA prenyltransferase family.</text>
</comment>
<organism>
    <name type="scientific">Shewanella amazonensis (strain ATCC BAA-1098 / SB2B)</name>
    <dbReference type="NCBI Taxonomy" id="326297"/>
    <lineage>
        <taxon>Bacteria</taxon>
        <taxon>Pseudomonadati</taxon>
        <taxon>Pseudomonadota</taxon>
        <taxon>Gammaproteobacteria</taxon>
        <taxon>Alteromonadales</taxon>
        <taxon>Shewanellaceae</taxon>
        <taxon>Shewanella</taxon>
    </lineage>
</organism>
<feature type="chain" id="PRO_0000336985" description="4-hydroxybenzoate octaprenyltransferase">
    <location>
        <begin position="1"/>
        <end position="290"/>
    </location>
</feature>
<feature type="transmembrane region" description="Helical" evidence="1">
    <location>
        <begin position="21"/>
        <end position="41"/>
    </location>
</feature>
<feature type="transmembrane region" description="Helical" evidence="1">
    <location>
        <begin position="44"/>
        <end position="64"/>
    </location>
</feature>
<feature type="transmembrane region" description="Helical" evidence="1">
    <location>
        <begin position="97"/>
        <end position="117"/>
    </location>
</feature>
<feature type="transmembrane region" description="Helical" evidence="1">
    <location>
        <begin position="143"/>
        <end position="163"/>
    </location>
</feature>
<feature type="transmembrane region" description="Helical" evidence="1">
    <location>
        <begin position="168"/>
        <end position="188"/>
    </location>
</feature>
<feature type="transmembrane region" description="Helical" evidence="1">
    <location>
        <begin position="211"/>
        <end position="231"/>
    </location>
</feature>
<feature type="transmembrane region" description="Helical" evidence="1">
    <location>
        <begin position="235"/>
        <end position="255"/>
    </location>
</feature>
<feature type="transmembrane region" description="Helical" evidence="1">
    <location>
        <begin position="270"/>
        <end position="290"/>
    </location>
</feature>